<gene>
    <name type="primary">gacI</name>
    <name type="ORF">DDB_G0275185</name>
</gene>
<reference key="1">
    <citation type="journal article" date="2002" name="Nature">
        <title>Sequence and analysis of chromosome 2 of Dictyostelium discoideum.</title>
        <authorList>
            <person name="Gloeckner G."/>
            <person name="Eichinger L."/>
            <person name="Szafranski K."/>
            <person name="Pachebat J.A."/>
            <person name="Bankier A.T."/>
            <person name="Dear P.H."/>
            <person name="Lehmann R."/>
            <person name="Baumgart C."/>
            <person name="Parra G."/>
            <person name="Abril J.F."/>
            <person name="Guigo R."/>
            <person name="Kumpf K."/>
            <person name="Tunggal B."/>
            <person name="Cox E.C."/>
            <person name="Quail M.A."/>
            <person name="Platzer M."/>
            <person name="Rosenthal A."/>
            <person name="Noegel A.A."/>
        </authorList>
    </citation>
    <scope>NUCLEOTIDE SEQUENCE [LARGE SCALE GENOMIC DNA]</scope>
    <source>
        <strain>AX4</strain>
    </source>
</reference>
<reference key="2">
    <citation type="journal article" date="2005" name="Nature">
        <title>The genome of the social amoeba Dictyostelium discoideum.</title>
        <authorList>
            <person name="Eichinger L."/>
            <person name="Pachebat J.A."/>
            <person name="Gloeckner G."/>
            <person name="Rajandream M.A."/>
            <person name="Sucgang R."/>
            <person name="Berriman M."/>
            <person name="Song J."/>
            <person name="Olsen R."/>
            <person name="Szafranski K."/>
            <person name="Xu Q."/>
            <person name="Tunggal B."/>
            <person name="Kummerfeld S."/>
            <person name="Madera M."/>
            <person name="Konfortov B.A."/>
            <person name="Rivero F."/>
            <person name="Bankier A.T."/>
            <person name="Lehmann R."/>
            <person name="Hamlin N."/>
            <person name="Davies R."/>
            <person name="Gaudet P."/>
            <person name="Fey P."/>
            <person name="Pilcher K."/>
            <person name="Chen G."/>
            <person name="Saunders D."/>
            <person name="Sodergren E.J."/>
            <person name="Davis P."/>
            <person name="Kerhornou A."/>
            <person name="Nie X."/>
            <person name="Hall N."/>
            <person name="Anjard C."/>
            <person name="Hemphill L."/>
            <person name="Bason N."/>
            <person name="Farbrother P."/>
            <person name="Desany B."/>
            <person name="Just E."/>
            <person name="Morio T."/>
            <person name="Rost R."/>
            <person name="Churcher C.M."/>
            <person name="Cooper J."/>
            <person name="Haydock S."/>
            <person name="van Driessche N."/>
            <person name="Cronin A."/>
            <person name="Goodhead I."/>
            <person name="Muzny D.M."/>
            <person name="Mourier T."/>
            <person name="Pain A."/>
            <person name="Lu M."/>
            <person name="Harper D."/>
            <person name="Lindsay R."/>
            <person name="Hauser H."/>
            <person name="James K.D."/>
            <person name="Quiles M."/>
            <person name="Madan Babu M."/>
            <person name="Saito T."/>
            <person name="Buchrieser C."/>
            <person name="Wardroper A."/>
            <person name="Felder M."/>
            <person name="Thangavelu M."/>
            <person name="Johnson D."/>
            <person name="Knights A."/>
            <person name="Loulseged H."/>
            <person name="Mungall K.L."/>
            <person name="Oliver K."/>
            <person name="Price C."/>
            <person name="Quail M.A."/>
            <person name="Urushihara H."/>
            <person name="Hernandez J."/>
            <person name="Rabbinowitsch E."/>
            <person name="Steffen D."/>
            <person name="Sanders M."/>
            <person name="Ma J."/>
            <person name="Kohara Y."/>
            <person name="Sharp S."/>
            <person name="Simmonds M.N."/>
            <person name="Spiegler S."/>
            <person name="Tivey A."/>
            <person name="Sugano S."/>
            <person name="White B."/>
            <person name="Walker D."/>
            <person name="Woodward J.R."/>
            <person name="Winckler T."/>
            <person name="Tanaka Y."/>
            <person name="Shaulsky G."/>
            <person name="Schleicher M."/>
            <person name="Weinstock G.M."/>
            <person name="Rosenthal A."/>
            <person name="Cox E.C."/>
            <person name="Chisholm R.L."/>
            <person name="Gibbs R.A."/>
            <person name="Loomis W.F."/>
            <person name="Platzer M."/>
            <person name="Kay R.R."/>
            <person name="Williams J.G."/>
            <person name="Dear P.H."/>
            <person name="Noegel A.A."/>
            <person name="Barrell B.G."/>
            <person name="Kuspa A."/>
        </authorList>
    </citation>
    <scope>NUCLEOTIDE SEQUENCE [LARGE SCALE GENOMIC DNA]</scope>
    <source>
        <strain>AX4</strain>
    </source>
</reference>
<dbReference type="EMBL" id="AAFI02000013">
    <property type="protein sequence ID" value="EAL69873.1"/>
    <property type="molecule type" value="Genomic_DNA"/>
</dbReference>
<dbReference type="RefSeq" id="XP_643838.1">
    <property type="nucleotide sequence ID" value="XM_638746.1"/>
</dbReference>
<dbReference type="SMR" id="Q553X3"/>
<dbReference type="FunCoup" id="Q553X3">
    <property type="interactions" value="40"/>
</dbReference>
<dbReference type="GlyGen" id="Q553X3">
    <property type="glycosylation" value="2 sites"/>
</dbReference>
<dbReference type="PaxDb" id="44689-DDB0233847"/>
<dbReference type="EnsemblProtists" id="EAL69873">
    <property type="protein sequence ID" value="EAL69873"/>
    <property type="gene ID" value="DDB_G0275185"/>
</dbReference>
<dbReference type="GeneID" id="8619885"/>
<dbReference type="KEGG" id="ddi:DDB_G0275185"/>
<dbReference type="dictyBase" id="DDB_G0275185">
    <property type="gene designation" value="gacI"/>
</dbReference>
<dbReference type="VEuPathDB" id="AmoebaDB:DDB_G0275185"/>
<dbReference type="eggNOG" id="KOG4270">
    <property type="taxonomic scope" value="Eukaryota"/>
</dbReference>
<dbReference type="HOGENOM" id="CLU_352132_0_0_1"/>
<dbReference type="InParanoid" id="Q553X3"/>
<dbReference type="OMA" id="QKGAFQM"/>
<dbReference type="PhylomeDB" id="Q553X3"/>
<dbReference type="Reactome" id="R-DDI-9013148">
    <property type="pathway name" value="CDC42 GTPase cycle"/>
</dbReference>
<dbReference type="Reactome" id="R-DDI-9013149">
    <property type="pathway name" value="RAC1 GTPase cycle"/>
</dbReference>
<dbReference type="Reactome" id="R-DDI-9013423">
    <property type="pathway name" value="RAC3 GTPase cycle"/>
</dbReference>
<dbReference type="Reactome" id="R-DDI-9013424">
    <property type="pathway name" value="RHOV GTPase cycle"/>
</dbReference>
<dbReference type="PRO" id="PR:Q553X3"/>
<dbReference type="Proteomes" id="UP000002195">
    <property type="component" value="Chromosome 2"/>
</dbReference>
<dbReference type="GO" id="GO:0005737">
    <property type="term" value="C:cytoplasm"/>
    <property type="evidence" value="ECO:0000318"/>
    <property type="project" value="GO_Central"/>
</dbReference>
<dbReference type="GO" id="GO:0005886">
    <property type="term" value="C:plasma membrane"/>
    <property type="evidence" value="ECO:0000318"/>
    <property type="project" value="GO_Central"/>
</dbReference>
<dbReference type="GO" id="GO:0005096">
    <property type="term" value="F:GTPase activator activity"/>
    <property type="evidence" value="ECO:0000318"/>
    <property type="project" value="GO_Central"/>
</dbReference>
<dbReference type="GO" id="GO:0007264">
    <property type="term" value="P:small GTPase-mediated signal transduction"/>
    <property type="evidence" value="ECO:0000318"/>
    <property type="project" value="GO_Central"/>
</dbReference>
<dbReference type="CDD" id="cd07307">
    <property type="entry name" value="BAR"/>
    <property type="match status" value="1"/>
</dbReference>
<dbReference type="CDD" id="cd00159">
    <property type="entry name" value="RhoGAP"/>
    <property type="match status" value="1"/>
</dbReference>
<dbReference type="Gene3D" id="1.10.555.10">
    <property type="entry name" value="Rho GTPase activation protein"/>
    <property type="match status" value="1"/>
</dbReference>
<dbReference type="InterPro" id="IPR027267">
    <property type="entry name" value="AH/BAR_dom_sf"/>
</dbReference>
<dbReference type="InterPro" id="IPR050729">
    <property type="entry name" value="Rho-GAP"/>
</dbReference>
<dbReference type="InterPro" id="IPR008936">
    <property type="entry name" value="Rho_GTPase_activation_prot"/>
</dbReference>
<dbReference type="InterPro" id="IPR000198">
    <property type="entry name" value="RhoGAP_dom"/>
</dbReference>
<dbReference type="PANTHER" id="PTHR23176:SF102">
    <property type="entry name" value="RHO GTPASE-ACTIVATING PROTEIN GACI"/>
    <property type="match status" value="1"/>
</dbReference>
<dbReference type="PANTHER" id="PTHR23176">
    <property type="entry name" value="RHO/RAC/CDC GTPASE-ACTIVATING PROTEIN"/>
    <property type="match status" value="1"/>
</dbReference>
<dbReference type="Pfam" id="PF00620">
    <property type="entry name" value="RhoGAP"/>
    <property type="match status" value="2"/>
</dbReference>
<dbReference type="SMART" id="SM00324">
    <property type="entry name" value="RhoGAP"/>
    <property type="match status" value="1"/>
</dbReference>
<dbReference type="SUPFAM" id="SSF103657">
    <property type="entry name" value="BAR/IMD domain-like"/>
    <property type="match status" value="1"/>
</dbReference>
<dbReference type="SUPFAM" id="SSF48350">
    <property type="entry name" value="GTPase activation domain, GAP"/>
    <property type="match status" value="1"/>
</dbReference>
<dbReference type="PROSITE" id="PS50238">
    <property type="entry name" value="RHOGAP"/>
    <property type="match status" value="1"/>
</dbReference>
<organism>
    <name type="scientific">Dictyostelium discoideum</name>
    <name type="common">Social amoeba</name>
    <dbReference type="NCBI Taxonomy" id="44689"/>
    <lineage>
        <taxon>Eukaryota</taxon>
        <taxon>Amoebozoa</taxon>
        <taxon>Evosea</taxon>
        <taxon>Eumycetozoa</taxon>
        <taxon>Dictyostelia</taxon>
        <taxon>Dictyosteliales</taxon>
        <taxon>Dictyosteliaceae</taxon>
        <taxon>Dictyostelium</taxon>
    </lineage>
</organism>
<keyword id="KW-0963">Cytoplasm</keyword>
<keyword id="KW-0343">GTPase activation</keyword>
<keyword id="KW-1185">Reference proteome</keyword>
<proteinExistence type="inferred from homology"/>
<accession>Q553X3</accession>
<accession>Q869Y5</accession>
<evidence type="ECO:0000250" key="1"/>
<evidence type="ECO:0000255" key="2">
    <source>
        <dbReference type="PROSITE-ProRule" id="PRU00172"/>
    </source>
</evidence>
<evidence type="ECO:0000256" key="3">
    <source>
        <dbReference type="SAM" id="MobiDB-lite"/>
    </source>
</evidence>
<feature type="chain" id="PRO_0000380205" description="Rho GTPase-activating protein gacI">
    <location>
        <begin position="1"/>
        <end position="799"/>
    </location>
</feature>
<feature type="domain" description="Rho-GAP" evidence="2">
    <location>
        <begin position="226"/>
        <end position="451"/>
    </location>
</feature>
<feature type="region of interest" description="Disordered" evidence="3">
    <location>
        <begin position="472"/>
        <end position="572"/>
    </location>
</feature>
<feature type="region of interest" description="Disordered" evidence="3">
    <location>
        <begin position="741"/>
        <end position="799"/>
    </location>
</feature>
<feature type="compositionally biased region" description="Polar residues" evidence="3">
    <location>
        <begin position="472"/>
        <end position="520"/>
    </location>
</feature>
<feature type="compositionally biased region" description="Low complexity" evidence="3">
    <location>
        <begin position="525"/>
        <end position="549"/>
    </location>
</feature>
<feature type="compositionally biased region" description="Pro residues" evidence="3">
    <location>
        <begin position="550"/>
        <end position="568"/>
    </location>
</feature>
<feature type="compositionally biased region" description="Low complexity" evidence="3">
    <location>
        <begin position="743"/>
        <end position="752"/>
    </location>
</feature>
<feature type="compositionally biased region" description="Low complexity" evidence="3">
    <location>
        <begin position="759"/>
        <end position="791"/>
    </location>
</feature>
<feature type="site" description="Arginine finger; crucial for GTP hydrolysis by stabilizing the transition state" evidence="2">
    <location>
        <position position="263"/>
    </location>
</feature>
<name>GACI_DICDI</name>
<protein>
    <recommendedName>
        <fullName>Rho GTPase-activating protein gacI</fullName>
    </recommendedName>
    <alternativeName>
        <fullName>GTPase activating factor for raC protein I</fullName>
    </alternativeName>
</protein>
<comment type="function">
    <text evidence="1">Rho GTPase-activating protein involved in the signal transduction pathway.</text>
</comment>
<comment type="subcellular location">
    <subcellularLocation>
        <location evidence="1">Cytoplasm</location>
    </subcellularLocation>
</comment>
<sequence length="799" mass="89039">MNIKSLRKKNIQNMDQEEVYNRIKENVAHMDEIQRTMEKQQQTFFQMSLQSKQIAESMKKYSMDAAYFNSRIPITDCLSRASEWQNSISEVFNHLGNLLYDRTTQPLKQTISIQLEMVKEGKKKLKNLSTDTSKSSSANLKKDTEAFERTQKETLQLYNDSELALENSTVQTILSSFESYNDFFQRGVFQMSKIKSDIDNYKKIILETNKVAAKLRNYVPKKTFGIKLEEVFARESNKPLPSFLDEIFRYLEKESINTEGMFRVSAGKSSLEALQQKIESGAPLELSASIIDPHCVSSVLKLFLRSLPEPLVLYNVYSKYLTVAKNNNNNNNNNNNNISNSSSNLNIVGSSGNNNSGGGSGGTIITELRRLISTLPVCNQALLKQILLICSLMNQHRDVTKMDLTNLSVVIGPSILEPIPNLKAEDIQRPETFADFNSLFCLLVEHVLTIFPQVSQTSMDMASLPTTIGKLRSQSDISSQTKPLPSLPTSPQNRSAIITGDSSSPSLNTPPVKSSLNSSDFVIVDNGSNNNNNNNTTNTITNNGIADTATPPPPTTPTAPTTPPPPTTPTSNNIATPIININIPNSSNNNNNNNTKRINNKSNLKVDDYLTPIDMQIYYINISSNLGRIKSYVDDIETVNQGIGLIKLFKKISDDHMAPIKNILNYKFKTEKPPMSNDEDKVLRIKRTLFYTYEITMELISHANNTFESSSIEEPTELSKKLEESFKQLDTILTDELSNIEKQQQQQQQQTNDGGGSGISSNTNTSISGDNSENGDSLNSSTSNQSPLNSSILTQLSNQ</sequence>